<evidence type="ECO:0000255" key="1">
    <source>
        <dbReference type="HAMAP-Rule" id="MF_00921"/>
    </source>
</evidence>
<organism>
    <name type="scientific">Listeria monocytogenes serotype 4b (strain F2365)</name>
    <dbReference type="NCBI Taxonomy" id="265669"/>
    <lineage>
        <taxon>Bacteria</taxon>
        <taxon>Bacillati</taxon>
        <taxon>Bacillota</taxon>
        <taxon>Bacilli</taxon>
        <taxon>Bacillales</taxon>
        <taxon>Listeriaceae</taxon>
        <taxon>Listeria</taxon>
    </lineage>
</organism>
<reference key="1">
    <citation type="journal article" date="2004" name="Nucleic Acids Res.">
        <title>Whole genome comparisons of serotype 4b and 1/2a strains of the food-borne pathogen Listeria monocytogenes reveal new insights into the core genome components of this species.</title>
        <authorList>
            <person name="Nelson K.E."/>
            <person name="Fouts D.E."/>
            <person name="Mongodin E.F."/>
            <person name="Ravel J."/>
            <person name="DeBoy R.T."/>
            <person name="Kolonay J.F."/>
            <person name="Rasko D.A."/>
            <person name="Angiuoli S.V."/>
            <person name="Gill S.R."/>
            <person name="Paulsen I.T."/>
            <person name="Peterson J.D."/>
            <person name="White O."/>
            <person name="Nelson W.C."/>
            <person name="Nierman W.C."/>
            <person name="Beanan M.J."/>
            <person name="Brinkac L.M."/>
            <person name="Daugherty S.C."/>
            <person name="Dodson R.J."/>
            <person name="Durkin A.S."/>
            <person name="Madupu R."/>
            <person name="Haft D.H."/>
            <person name="Selengut J."/>
            <person name="Van Aken S.E."/>
            <person name="Khouri H.M."/>
            <person name="Fedorova N."/>
            <person name="Forberger H.A."/>
            <person name="Tran B."/>
            <person name="Kathariou S."/>
            <person name="Wonderling L.D."/>
            <person name="Uhlich G.A."/>
            <person name="Bayles D.O."/>
            <person name="Luchansky J.B."/>
            <person name="Fraser C.M."/>
        </authorList>
    </citation>
    <scope>NUCLEOTIDE SEQUENCE [LARGE SCALE GENOMIC DNA]</scope>
    <source>
        <strain>F2365</strain>
    </source>
</reference>
<dbReference type="EC" id="2.7.11.32" evidence="1"/>
<dbReference type="EC" id="2.7.4.27" evidence="1"/>
<dbReference type="EMBL" id="AE017262">
    <property type="protein sequence ID" value="AAT04251.1"/>
    <property type="molecule type" value="Genomic_DNA"/>
</dbReference>
<dbReference type="RefSeq" id="WP_003721963.1">
    <property type="nucleotide sequence ID" value="NC_002973.6"/>
</dbReference>
<dbReference type="SMR" id="Q71ZL3"/>
<dbReference type="KEGG" id="lmf:LMOf2365_1476"/>
<dbReference type="HOGENOM" id="CLU_046206_2_1_9"/>
<dbReference type="GO" id="GO:0043531">
    <property type="term" value="F:ADP binding"/>
    <property type="evidence" value="ECO:0007669"/>
    <property type="project" value="UniProtKB-UniRule"/>
</dbReference>
<dbReference type="GO" id="GO:0005524">
    <property type="term" value="F:ATP binding"/>
    <property type="evidence" value="ECO:0007669"/>
    <property type="project" value="InterPro"/>
</dbReference>
<dbReference type="GO" id="GO:0016776">
    <property type="term" value="F:phosphotransferase activity, phosphate group as acceptor"/>
    <property type="evidence" value="ECO:0007669"/>
    <property type="project" value="UniProtKB-UniRule"/>
</dbReference>
<dbReference type="GO" id="GO:0004674">
    <property type="term" value="F:protein serine/threonine kinase activity"/>
    <property type="evidence" value="ECO:0007669"/>
    <property type="project" value="UniProtKB-UniRule"/>
</dbReference>
<dbReference type="HAMAP" id="MF_00921">
    <property type="entry name" value="PDRP"/>
    <property type="match status" value="1"/>
</dbReference>
<dbReference type="InterPro" id="IPR005177">
    <property type="entry name" value="Kinase-pyrophosphorylase"/>
</dbReference>
<dbReference type="InterPro" id="IPR026565">
    <property type="entry name" value="PPDK_reg"/>
</dbReference>
<dbReference type="NCBIfam" id="NF003742">
    <property type="entry name" value="PRK05339.1"/>
    <property type="match status" value="1"/>
</dbReference>
<dbReference type="PANTHER" id="PTHR31756">
    <property type="entry name" value="PYRUVATE, PHOSPHATE DIKINASE REGULATORY PROTEIN 1, CHLOROPLASTIC"/>
    <property type="match status" value="1"/>
</dbReference>
<dbReference type="PANTHER" id="PTHR31756:SF3">
    <property type="entry name" value="PYRUVATE, PHOSPHATE DIKINASE REGULATORY PROTEIN 1, CHLOROPLASTIC"/>
    <property type="match status" value="1"/>
</dbReference>
<dbReference type="Pfam" id="PF03618">
    <property type="entry name" value="Kinase-PPPase"/>
    <property type="match status" value="1"/>
</dbReference>
<comment type="function">
    <text evidence="1">Bifunctional serine/threonine kinase and phosphorylase involved in the regulation of the pyruvate, phosphate dikinase (PPDK) by catalyzing its phosphorylation/dephosphorylation.</text>
</comment>
<comment type="catalytic activity">
    <reaction evidence="1">
        <text>N(tele)-phospho-L-histidyl/L-threonyl-[pyruvate, phosphate dikinase] + ADP = N(tele)-phospho-L-histidyl/O-phospho-L-threonyl-[pyruvate, phosphate dikinase] + AMP + H(+)</text>
        <dbReference type="Rhea" id="RHEA:43692"/>
        <dbReference type="Rhea" id="RHEA-COMP:10650"/>
        <dbReference type="Rhea" id="RHEA-COMP:10651"/>
        <dbReference type="ChEBI" id="CHEBI:15378"/>
        <dbReference type="ChEBI" id="CHEBI:30013"/>
        <dbReference type="ChEBI" id="CHEBI:61977"/>
        <dbReference type="ChEBI" id="CHEBI:83586"/>
        <dbReference type="ChEBI" id="CHEBI:456215"/>
        <dbReference type="ChEBI" id="CHEBI:456216"/>
        <dbReference type="EC" id="2.7.11.32"/>
    </reaction>
</comment>
<comment type="catalytic activity">
    <reaction evidence="1">
        <text>N(tele)-phospho-L-histidyl/O-phospho-L-threonyl-[pyruvate, phosphate dikinase] + phosphate + H(+) = N(tele)-phospho-L-histidyl/L-threonyl-[pyruvate, phosphate dikinase] + diphosphate</text>
        <dbReference type="Rhea" id="RHEA:43696"/>
        <dbReference type="Rhea" id="RHEA-COMP:10650"/>
        <dbReference type="Rhea" id="RHEA-COMP:10651"/>
        <dbReference type="ChEBI" id="CHEBI:15378"/>
        <dbReference type="ChEBI" id="CHEBI:30013"/>
        <dbReference type="ChEBI" id="CHEBI:33019"/>
        <dbReference type="ChEBI" id="CHEBI:43474"/>
        <dbReference type="ChEBI" id="CHEBI:61977"/>
        <dbReference type="ChEBI" id="CHEBI:83586"/>
        <dbReference type="EC" id="2.7.4.27"/>
    </reaction>
</comment>
<comment type="similarity">
    <text evidence="1">Belongs to the pyruvate, phosphate/water dikinase regulatory protein family. PDRP subfamily.</text>
</comment>
<sequence>MTQPAVYVVSDSTGETAELVTRAALSQFGQTPKFIHRFHHVDSSHMIEEIVDLVAVNNGIIVHTIVLESVREELNKTAQAFGVPIIDLFGPLLNQLEETYKIKPLSEPGRVRSMDEAYFNKVAAIEFAVENDDGRNPRGILQADYVLIGISRTSKTPLSQYLALKGLKIVNIPIVPEAQIPDELFEIDPKKIIGLKISKQKLTKIRQERLISIGLPGAGTYASNQRIDEELAIFNKLASKLNCFVLDVTNKAIEETANEILIHIGEIVDENLEL</sequence>
<keyword id="KW-0418">Kinase</keyword>
<keyword id="KW-0547">Nucleotide-binding</keyword>
<keyword id="KW-0723">Serine/threonine-protein kinase</keyword>
<keyword id="KW-0808">Transferase</keyword>
<proteinExistence type="inferred from homology"/>
<accession>Q71ZL3</accession>
<protein>
    <recommendedName>
        <fullName evidence="1">Putative pyruvate, phosphate dikinase regulatory protein 1</fullName>
        <shortName evidence="1">PPDK regulatory protein 1</shortName>
        <ecNumber evidence="1">2.7.11.32</ecNumber>
        <ecNumber evidence="1">2.7.4.27</ecNumber>
    </recommendedName>
</protein>
<feature type="chain" id="PRO_0000196675" description="Putative pyruvate, phosphate dikinase regulatory protein 1">
    <location>
        <begin position="1"/>
        <end position="274"/>
    </location>
</feature>
<feature type="binding site" evidence="1">
    <location>
        <begin position="149"/>
        <end position="156"/>
    </location>
    <ligand>
        <name>ADP</name>
        <dbReference type="ChEBI" id="CHEBI:456216"/>
    </ligand>
</feature>
<gene>
    <name type="ordered locus">LMOf2365_1476</name>
</gene>
<name>PDRP1_LISMF</name>